<reference key="1">
    <citation type="submission" date="2007-05" db="EMBL/GenBank/DDBJ databases">
        <title>Complete sequence of chromosome of Acidiphilium cryptum JF-5.</title>
        <authorList>
            <consortium name="US DOE Joint Genome Institute"/>
            <person name="Copeland A."/>
            <person name="Lucas S."/>
            <person name="Lapidus A."/>
            <person name="Barry K."/>
            <person name="Detter J.C."/>
            <person name="Glavina del Rio T."/>
            <person name="Hammon N."/>
            <person name="Israni S."/>
            <person name="Dalin E."/>
            <person name="Tice H."/>
            <person name="Pitluck S."/>
            <person name="Sims D."/>
            <person name="Brettin T."/>
            <person name="Bruce D."/>
            <person name="Han C."/>
            <person name="Schmutz J."/>
            <person name="Larimer F."/>
            <person name="Land M."/>
            <person name="Hauser L."/>
            <person name="Kyrpides N."/>
            <person name="Kim E."/>
            <person name="Magnuson T."/>
            <person name="Richardson P."/>
        </authorList>
    </citation>
    <scope>NUCLEOTIDE SEQUENCE [LARGE SCALE GENOMIC DNA]</scope>
    <source>
        <strain>JF-5</strain>
    </source>
</reference>
<protein>
    <recommendedName>
        <fullName evidence="1">Pantothenate synthetase</fullName>
        <shortName evidence="1">PS</shortName>
        <ecNumber evidence="1">6.3.2.1</ecNumber>
    </recommendedName>
    <alternativeName>
        <fullName evidence="1">Pantoate--beta-alanine ligase</fullName>
    </alternativeName>
    <alternativeName>
        <fullName evidence="1">Pantoate-activating enzyme</fullName>
    </alternativeName>
</protein>
<comment type="function">
    <text evidence="1">Catalyzes the condensation of pantoate with beta-alanine in an ATP-dependent reaction via a pantoyl-adenylate intermediate.</text>
</comment>
<comment type="catalytic activity">
    <reaction evidence="1">
        <text>(R)-pantoate + beta-alanine + ATP = (R)-pantothenate + AMP + diphosphate + H(+)</text>
        <dbReference type="Rhea" id="RHEA:10912"/>
        <dbReference type="ChEBI" id="CHEBI:15378"/>
        <dbReference type="ChEBI" id="CHEBI:15980"/>
        <dbReference type="ChEBI" id="CHEBI:29032"/>
        <dbReference type="ChEBI" id="CHEBI:30616"/>
        <dbReference type="ChEBI" id="CHEBI:33019"/>
        <dbReference type="ChEBI" id="CHEBI:57966"/>
        <dbReference type="ChEBI" id="CHEBI:456215"/>
        <dbReference type="EC" id="6.3.2.1"/>
    </reaction>
</comment>
<comment type="pathway">
    <text evidence="1">Cofactor biosynthesis; (R)-pantothenate biosynthesis; (R)-pantothenate from (R)-pantoate and beta-alanine: step 1/1.</text>
</comment>
<comment type="subunit">
    <text evidence="1">Homodimer.</text>
</comment>
<comment type="subcellular location">
    <subcellularLocation>
        <location evidence="1">Cytoplasm</location>
    </subcellularLocation>
</comment>
<comment type="miscellaneous">
    <text evidence="1">The reaction proceeds by a bi uni uni bi ping pong mechanism.</text>
</comment>
<comment type="similarity">
    <text evidence="1">Belongs to the pantothenate synthetase family.</text>
</comment>
<proteinExistence type="inferred from homology"/>
<keyword id="KW-0067">ATP-binding</keyword>
<keyword id="KW-0963">Cytoplasm</keyword>
<keyword id="KW-0436">Ligase</keyword>
<keyword id="KW-0547">Nucleotide-binding</keyword>
<keyword id="KW-0566">Pantothenate biosynthesis</keyword>
<keyword id="KW-1185">Reference proteome</keyword>
<accession>A5FVZ7</accession>
<organism>
    <name type="scientific">Acidiphilium cryptum (strain JF-5)</name>
    <dbReference type="NCBI Taxonomy" id="349163"/>
    <lineage>
        <taxon>Bacteria</taxon>
        <taxon>Pseudomonadati</taxon>
        <taxon>Pseudomonadota</taxon>
        <taxon>Alphaproteobacteria</taxon>
        <taxon>Acetobacterales</taxon>
        <taxon>Acidocellaceae</taxon>
        <taxon>Acidiphilium</taxon>
    </lineage>
</organism>
<gene>
    <name evidence="1" type="primary">panC</name>
    <name type="ordered locus">Acry_0555</name>
</gene>
<evidence type="ECO:0000255" key="1">
    <source>
        <dbReference type="HAMAP-Rule" id="MF_00158"/>
    </source>
</evidence>
<sequence>MQIVRNVPDLRAARAALTDGGRARLALVPTMGALHEGHLSLVRAAREAGHVVAASIFVNPTQFGPNEDFTRYPRDPERDCALLAEAGCALAWLPEVSTMYPPGDATSVEVAGLSVVLEGAVRPGHYRGVATVVVKLLGQVRPDAAYFGEKDWQQVQVIRRVAADLFLPVEIVVGPTLREKDGLAMSSRNRYLDPADRARAPLLHQVLRRVRAALRDGEPAAAALAAGRRALAEGGFIVDYLELVDAGTLAPLTAPDDGARLLAAARLGTTRLLDTVAV</sequence>
<feature type="chain" id="PRO_1000118137" description="Pantothenate synthetase">
    <location>
        <begin position="1"/>
        <end position="278"/>
    </location>
</feature>
<feature type="active site" description="Proton donor" evidence="1">
    <location>
        <position position="38"/>
    </location>
</feature>
<feature type="binding site" evidence="1">
    <location>
        <begin position="31"/>
        <end position="38"/>
    </location>
    <ligand>
        <name>ATP</name>
        <dbReference type="ChEBI" id="CHEBI:30616"/>
    </ligand>
</feature>
<feature type="binding site" evidence="1">
    <location>
        <position position="62"/>
    </location>
    <ligand>
        <name>(R)-pantoate</name>
        <dbReference type="ChEBI" id="CHEBI:15980"/>
    </ligand>
</feature>
<feature type="binding site" evidence="1">
    <location>
        <position position="62"/>
    </location>
    <ligand>
        <name>beta-alanine</name>
        <dbReference type="ChEBI" id="CHEBI:57966"/>
    </ligand>
</feature>
<feature type="binding site" evidence="1">
    <location>
        <begin position="148"/>
        <end position="151"/>
    </location>
    <ligand>
        <name>ATP</name>
        <dbReference type="ChEBI" id="CHEBI:30616"/>
    </ligand>
</feature>
<feature type="binding site" evidence="1">
    <location>
        <position position="154"/>
    </location>
    <ligand>
        <name>(R)-pantoate</name>
        <dbReference type="ChEBI" id="CHEBI:15980"/>
    </ligand>
</feature>
<feature type="binding site" evidence="1">
    <location>
        <position position="177"/>
    </location>
    <ligand>
        <name>ATP</name>
        <dbReference type="ChEBI" id="CHEBI:30616"/>
    </ligand>
</feature>
<feature type="binding site" evidence="1">
    <location>
        <begin position="185"/>
        <end position="188"/>
    </location>
    <ligand>
        <name>ATP</name>
        <dbReference type="ChEBI" id="CHEBI:30616"/>
    </ligand>
</feature>
<name>PANC_ACICJ</name>
<dbReference type="EC" id="6.3.2.1" evidence="1"/>
<dbReference type="EMBL" id="CP000697">
    <property type="protein sequence ID" value="ABQ29779.1"/>
    <property type="molecule type" value="Genomic_DNA"/>
</dbReference>
<dbReference type="RefSeq" id="WP_011941603.1">
    <property type="nucleotide sequence ID" value="NC_009484.1"/>
</dbReference>
<dbReference type="SMR" id="A5FVZ7"/>
<dbReference type="STRING" id="349163.Acry_0555"/>
<dbReference type="KEGG" id="acr:Acry_0555"/>
<dbReference type="eggNOG" id="COG0414">
    <property type="taxonomic scope" value="Bacteria"/>
</dbReference>
<dbReference type="HOGENOM" id="CLU_047148_0_2_5"/>
<dbReference type="UniPathway" id="UPA00028">
    <property type="reaction ID" value="UER00005"/>
</dbReference>
<dbReference type="Proteomes" id="UP000000245">
    <property type="component" value="Chromosome"/>
</dbReference>
<dbReference type="GO" id="GO:0005829">
    <property type="term" value="C:cytosol"/>
    <property type="evidence" value="ECO:0007669"/>
    <property type="project" value="TreeGrafter"/>
</dbReference>
<dbReference type="GO" id="GO:0005524">
    <property type="term" value="F:ATP binding"/>
    <property type="evidence" value="ECO:0007669"/>
    <property type="project" value="UniProtKB-KW"/>
</dbReference>
<dbReference type="GO" id="GO:0004592">
    <property type="term" value="F:pantoate-beta-alanine ligase activity"/>
    <property type="evidence" value="ECO:0007669"/>
    <property type="project" value="UniProtKB-UniRule"/>
</dbReference>
<dbReference type="GO" id="GO:0015940">
    <property type="term" value="P:pantothenate biosynthetic process"/>
    <property type="evidence" value="ECO:0007669"/>
    <property type="project" value="UniProtKB-UniRule"/>
</dbReference>
<dbReference type="CDD" id="cd00560">
    <property type="entry name" value="PanC"/>
    <property type="match status" value="1"/>
</dbReference>
<dbReference type="Gene3D" id="3.40.50.620">
    <property type="entry name" value="HUPs"/>
    <property type="match status" value="1"/>
</dbReference>
<dbReference type="Gene3D" id="3.30.1300.10">
    <property type="entry name" value="Pantoate-beta-alanine ligase, C-terminal domain"/>
    <property type="match status" value="1"/>
</dbReference>
<dbReference type="HAMAP" id="MF_00158">
    <property type="entry name" value="PanC"/>
    <property type="match status" value="1"/>
</dbReference>
<dbReference type="InterPro" id="IPR003721">
    <property type="entry name" value="Pantoate_ligase"/>
</dbReference>
<dbReference type="InterPro" id="IPR042176">
    <property type="entry name" value="Pantoate_ligase_C"/>
</dbReference>
<dbReference type="InterPro" id="IPR014729">
    <property type="entry name" value="Rossmann-like_a/b/a_fold"/>
</dbReference>
<dbReference type="NCBIfam" id="TIGR00018">
    <property type="entry name" value="panC"/>
    <property type="match status" value="1"/>
</dbReference>
<dbReference type="PANTHER" id="PTHR21299">
    <property type="entry name" value="CYTIDYLATE KINASE/PANTOATE-BETA-ALANINE LIGASE"/>
    <property type="match status" value="1"/>
</dbReference>
<dbReference type="PANTHER" id="PTHR21299:SF1">
    <property type="entry name" value="PANTOATE--BETA-ALANINE LIGASE"/>
    <property type="match status" value="1"/>
</dbReference>
<dbReference type="Pfam" id="PF02569">
    <property type="entry name" value="Pantoate_ligase"/>
    <property type="match status" value="1"/>
</dbReference>
<dbReference type="SUPFAM" id="SSF52374">
    <property type="entry name" value="Nucleotidylyl transferase"/>
    <property type="match status" value="1"/>
</dbReference>